<sequence length="365" mass="40268">MSKPAVKSVQSATAKTATRAVNIRQKVKAPKQAKPEAKGRVRPSKDKPRVEIKKALHPRNAHLNGYDFPALISAFPQLKTFVRPTPYGALSVDFADPLAVKTLNAALLKHHYGIGSWNIPEGALCPPIPGRVDYVHYVADLLAEGDKSCAMDKARVLDIGTGANGIYPILGCQVYGWQYVASDINAHSLTNVQSIIEQNPVLQGRISLRLQPDDKAVFKGVIQAEERFELTLCNPPFHASMAEASEGTKRKVNNLQLNRGSSVKAAPKLNFGGQAAELWCQGGERQFLATMIRESQMFADQCLWFTSLVSKQENLKPCYQALAQLNVDTVKTIEMQQGNKITRVLAWSFQSAAKRKLWRAEHLAN</sequence>
<feature type="chain" id="PRO_0000349952" description="Ribosomal RNA large subunit methyltransferase F">
    <location>
        <begin position="1"/>
        <end position="365"/>
    </location>
</feature>
<feature type="region of interest" description="Disordered" evidence="2">
    <location>
        <begin position="1"/>
        <end position="49"/>
    </location>
</feature>
<feature type="compositionally biased region" description="Basic and acidic residues" evidence="2">
    <location>
        <begin position="33"/>
        <end position="49"/>
    </location>
</feature>
<reference key="1">
    <citation type="submission" date="2007-07" db="EMBL/GenBank/DDBJ databases">
        <title>Complete sequence of chromosome of Shewanella baltica OS185.</title>
        <authorList>
            <consortium name="US DOE Joint Genome Institute"/>
            <person name="Copeland A."/>
            <person name="Lucas S."/>
            <person name="Lapidus A."/>
            <person name="Barry K."/>
            <person name="Glavina del Rio T."/>
            <person name="Dalin E."/>
            <person name="Tice H."/>
            <person name="Pitluck S."/>
            <person name="Sims D."/>
            <person name="Brettin T."/>
            <person name="Bruce D."/>
            <person name="Detter J.C."/>
            <person name="Han C."/>
            <person name="Schmutz J."/>
            <person name="Larimer F."/>
            <person name="Land M."/>
            <person name="Hauser L."/>
            <person name="Kyrpides N."/>
            <person name="Mikhailova N."/>
            <person name="Brettar I."/>
            <person name="Rodrigues J."/>
            <person name="Konstantinidis K."/>
            <person name="Tiedje J."/>
            <person name="Richardson P."/>
        </authorList>
    </citation>
    <scope>NUCLEOTIDE SEQUENCE [LARGE SCALE GENOMIC DNA]</scope>
    <source>
        <strain>OS185</strain>
    </source>
</reference>
<comment type="function">
    <text evidence="1">Specifically methylates the adenine in position 1618 of 23S rRNA.</text>
</comment>
<comment type="catalytic activity">
    <reaction evidence="1">
        <text>adenosine(1618) in 23S rRNA + S-adenosyl-L-methionine = N(6)-methyladenosine(1618) in 23S rRNA + S-adenosyl-L-homocysteine + H(+)</text>
        <dbReference type="Rhea" id="RHEA:16497"/>
        <dbReference type="Rhea" id="RHEA-COMP:10229"/>
        <dbReference type="Rhea" id="RHEA-COMP:10231"/>
        <dbReference type="ChEBI" id="CHEBI:15378"/>
        <dbReference type="ChEBI" id="CHEBI:57856"/>
        <dbReference type="ChEBI" id="CHEBI:59789"/>
        <dbReference type="ChEBI" id="CHEBI:74411"/>
        <dbReference type="ChEBI" id="CHEBI:74449"/>
        <dbReference type="EC" id="2.1.1.181"/>
    </reaction>
</comment>
<comment type="subcellular location">
    <subcellularLocation>
        <location evidence="1">Cytoplasm</location>
    </subcellularLocation>
</comment>
<comment type="similarity">
    <text evidence="1">Belongs to the methyltransferase superfamily. METTL16/RlmF family.</text>
</comment>
<proteinExistence type="inferred from homology"/>
<dbReference type="EC" id="2.1.1.181" evidence="1"/>
<dbReference type="EMBL" id="CP000753">
    <property type="protein sequence ID" value="ABS06298.1"/>
    <property type="molecule type" value="Genomic_DNA"/>
</dbReference>
<dbReference type="RefSeq" id="WP_011982075.1">
    <property type="nucleotide sequence ID" value="NC_009665.1"/>
</dbReference>
<dbReference type="SMR" id="A6WHK9"/>
<dbReference type="KEGG" id="sbm:Shew185_0127"/>
<dbReference type="HOGENOM" id="CLU_027534_3_0_6"/>
<dbReference type="GO" id="GO:0005737">
    <property type="term" value="C:cytoplasm"/>
    <property type="evidence" value="ECO:0007669"/>
    <property type="project" value="UniProtKB-SubCell"/>
</dbReference>
<dbReference type="GO" id="GO:0052907">
    <property type="term" value="F:23S rRNA (adenine(1618)-N(6))-methyltransferase activity"/>
    <property type="evidence" value="ECO:0007669"/>
    <property type="project" value="UniProtKB-EC"/>
</dbReference>
<dbReference type="GO" id="GO:0070475">
    <property type="term" value="P:rRNA base methylation"/>
    <property type="evidence" value="ECO:0007669"/>
    <property type="project" value="TreeGrafter"/>
</dbReference>
<dbReference type="CDD" id="cd02440">
    <property type="entry name" value="AdoMet_MTases"/>
    <property type="match status" value="1"/>
</dbReference>
<dbReference type="Gene3D" id="3.40.50.150">
    <property type="entry name" value="Vaccinia Virus protein VP39"/>
    <property type="match status" value="1"/>
</dbReference>
<dbReference type="HAMAP" id="MF_01848">
    <property type="entry name" value="23SrRNA_methyltr_F"/>
    <property type="match status" value="1"/>
</dbReference>
<dbReference type="InterPro" id="IPR010286">
    <property type="entry name" value="METTL16/RlmF"/>
</dbReference>
<dbReference type="InterPro" id="IPR016909">
    <property type="entry name" value="rRNA_lsu_MeTfrase_F"/>
</dbReference>
<dbReference type="InterPro" id="IPR029063">
    <property type="entry name" value="SAM-dependent_MTases_sf"/>
</dbReference>
<dbReference type="NCBIfam" id="NF008725">
    <property type="entry name" value="PRK11727.1"/>
    <property type="match status" value="1"/>
</dbReference>
<dbReference type="PANTHER" id="PTHR13393:SF0">
    <property type="entry name" value="RNA N6-ADENOSINE-METHYLTRANSFERASE METTL16"/>
    <property type="match status" value="1"/>
</dbReference>
<dbReference type="PANTHER" id="PTHR13393">
    <property type="entry name" value="SAM-DEPENDENT METHYLTRANSFERASE"/>
    <property type="match status" value="1"/>
</dbReference>
<dbReference type="Pfam" id="PF05971">
    <property type="entry name" value="Methyltransf_10"/>
    <property type="match status" value="1"/>
</dbReference>
<dbReference type="PIRSF" id="PIRSF029038">
    <property type="entry name" value="Mtase_YbiN_prd"/>
    <property type="match status" value="1"/>
</dbReference>
<dbReference type="SUPFAM" id="SSF53335">
    <property type="entry name" value="S-adenosyl-L-methionine-dependent methyltransferases"/>
    <property type="match status" value="1"/>
</dbReference>
<evidence type="ECO:0000255" key="1">
    <source>
        <dbReference type="HAMAP-Rule" id="MF_01848"/>
    </source>
</evidence>
<evidence type="ECO:0000256" key="2">
    <source>
        <dbReference type="SAM" id="MobiDB-lite"/>
    </source>
</evidence>
<accession>A6WHK9</accession>
<gene>
    <name evidence="1" type="primary">rlmF</name>
    <name type="ordered locus">Shew185_0127</name>
</gene>
<keyword id="KW-0963">Cytoplasm</keyword>
<keyword id="KW-0489">Methyltransferase</keyword>
<keyword id="KW-0698">rRNA processing</keyword>
<keyword id="KW-0949">S-adenosyl-L-methionine</keyword>
<keyword id="KW-0808">Transferase</keyword>
<organism>
    <name type="scientific">Shewanella baltica (strain OS185)</name>
    <dbReference type="NCBI Taxonomy" id="402882"/>
    <lineage>
        <taxon>Bacteria</taxon>
        <taxon>Pseudomonadati</taxon>
        <taxon>Pseudomonadota</taxon>
        <taxon>Gammaproteobacteria</taxon>
        <taxon>Alteromonadales</taxon>
        <taxon>Shewanellaceae</taxon>
        <taxon>Shewanella</taxon>
    </lineage>
</organism>
<name>RLMF_SHEB8</name>
<protein>
    <recommendedName>
        <fullName evidence="1">Ribosomal RNA large subunit methyltransferase F</fullName>
        <ecNumber evidence="1">2.1.1.181</ecNumber>
    </recommendedName>
    <alternativeName>
        <fullName evidence="1">23S rRNA mA1618 methyltransferase</fullName>
    </alternativeName>
    <alternativeName>
        <fullName evidence="1">rRNA adenine N-6-methyltransferase</fullName>
    </alternativeName>
</protein>